<feature type="chain" id="PRO_0000257356" description="Ribosomal RNA small subunit methyltransferase A">
    <location>
        <begin position="1"/>
        <end position="290"/>
    </location>
</feature>
<feature type="binding site" evidence="1">
    <location>
        <position position="27"/>
    </location>
    <ligand>
        <name>S-adenosyl-L-methionine</name>
        <dbReference type="ChEBI" id="CHEBI:59789"/>
    </ligand>
</feature>
<feature type="binding site" evidence="1">
    <location>
        <position position="29"/>
    </location>
    <ligand>
        <name>S-adenosyl-L-methionine</name>
        <dbReference type="ChEBI" id="CHEBI:59789"/>
    </ligand>
</feature>
<feature type="binding site" evidence="1">
    <location>
        <position position="54"/>
    </location>
    <ligand>
        <name>S-adenosyl-L-methionine</name>
        <dbReference type="ChEBI" id="CHEBI:59789"/>
    </ligand>
</feature>
<feature type="binding site" evidence="1">
    <location>
        <position position="75"/>
    </location>
    <ligand>
        <name>S-adenosyl-L-methionine</name>
        <dbReference type="ChEBI" id="CHEBI:59789"/>
    </ligand>
</feature>
<feature type="binding site" evidence="1">
    <location>
        <position position="100"/>
    </location>
    <ligand>
        <name>S-adenosyl-L-methionine</name>
        <dbReference type="ChEBI" id="CHEBI:59789"/>
    </ligand>
</feature>
<feature type="binding site" evidence="1">
    <location>
        <position position="125"/>
    </location>
    <ligand>
        <name>S-adenosyl-L-methionine</name>
        <dbReference type="ChEBI" id="CHEBI:59789"/>
    </ligand>
</feature>
<protein>
    <recommendedName>
        <fullName evidence="1">Ribosomal RNA small subunit methyltransferase A</fullName>
        <ecNumber evidence="1">2.1.1.182</ecNumber>
    </recommendedName>
    <alternativeName>
        <fullName evidence="1">16S rRNA (adenine(1518)-N(6)/adenine(1519)-N(6))-dimethyltransferase</fullName>
    </alternativeName>
    <alternativeName>
        <fullName evidence="1">16S rRNA dimethyladenosine transferase</fullName>
    </alternativeName>
    <alternativeName>
        <fullName evidence="1">16S rRNA dimethylase</fullName>
    </alternativeName>
    <alternativeName>
        <fullName evidence="1">S-adenosylmethionine-6-N', N'-adenosyl(rRNA) dimethyltransferase</fullName>
    </alternativeName>
</protein>
<proteinExistence type="inferred from homology"/>
<reference key="1">
    <citation type="journal article" date="2005" name="Proc. Natl. Acad. Sci. U.S.A.">
        <title>Genome analysis of multiple pathogenic isolates of Streptococcus agalactiae: implications for the microbial 'pan-genome'.</title>
        <authorList>
            <person name="Tettelin H."/>
            <person name="Masignani V."/>
            <person name="Cieslewicz M.J."/>
            <person name="Donati C."/>
            <person name="Medini D."/>
            <person name="Ward N.L."/>
            <person name="Angiuoli S.V."/>
            <person name="Crabtree J."/>
            <person name="Jones A.L."/>
            <person name="Durkin A.S."/>
            <person name="DeBoy R.T."/>
            <person name="Davidsen T.M."/>
            <person name="Mora M."/>
            <person name="Scarselli M."/>
            <person name="Margarit y Ros I."/>
            <person name="Peterson J.D."/>
            <person name="Hauser C.R."/>
            <person name="Sundaram J.P."/>
            <person name="Nelson W.C."/>
            <person name="Madupu R."/>
            <person name="Brinkac L.M."/>
            <person name="Dodson R.J."/>
            <person name="Rosovitz M.J."/>
            <person name="Sullivan S.A."/>
            <person name="Daugherty S.C."/>
            <person name="Haft D.H."/>
            <person name="Selengut J."/>
            <person name="Gwinn M.L."/>
            <person name="Zhou L."/>
            <person name="Zafar N."/>
            <person name="Khouri H."/>
            <person name="Radune D."/>
            <person name="Dimitrov G."/>
            <person name="Watkins K."/>
            <person name="O'Connor K.J."/>
            <person name="Smith S."/>
            <person name="Utterback T.R."/>
            <person name="White O."/>
            <person name="Rubens C.E."/>
            <person name="Grandi G."/>
            <person name="Madoff L.C."/>
            <person name="Kasper D.L."/>
            <person name="Telford J.L."/>
            <person name="Wessels M.R."/>
            <person name="Rappuoli R."/>
            <person name="Fraser C.M."/>
        </authorList>
    </citation>
    <scope>NUCLEOTIDE SEQUENCE [LARGE SCALE GENOMIC DNA]</scope>
    <source>
        <strain>ATCC 27591 / A909 / CDC SS700</strain>
    </source>
</reference>
<gene>
    <name evidence="1" type="primary">rsmA</name>
    <name evidence="1" type="synonym">ksgA</name>
    <name type="ordered locus">SAK_1801</name>
</gene>
<dbReference type="EC" id="2.1.1.182" evidence="1"/>
<dbReference type="EMBL" id="CP000114">
    <property type="protein sequence ID" value="ABA44983.1"/>
    <property type="molecule type" value="Genomic_DNA"/>
</dbReference>
<dbReference type="RefSeq" id="WP_001216821.1">
    <property type="nucleotide sequence ID" value="NC_007432.1"/>
</dbReference>
<dbReference type="SMR" id="Q3JZA5"/>
<dbReference type="KEGG" id="sak:SAK_1801"/>
<dbReference type="HOGENOM" id="CLU_041220_0_0_9"/>
<dbReference type="GO" id="GO:0005829">
    <property type="term" value="C:cytosol"/>
    <property type="evidence" value="ECO:0007669"/>
    <property type="project" value="TreeGrafter"/>
</dbReference>
<dbReference type="GO" id="GO:0052908">
    <property type="term" value="F:16S rRNA (adenine(1518)-N(6)/adenine(1519)-N(6))-dimethyltransferase activity"/>
    <property type="evidence" value="ECO:0007669"/>
    <property type="project" value="UniProtKB-EC"/>
</dbReference>
<dbReference type="GO" id="GO:0003723">
    <property type="term" value="F:RNA binding"/>
    <property type="evidence" value="ECO:0007669"/>
    <property type="project" value="UniProtKB-KW"/>
</dbReference>
<dbReference type="CDD" id="cd02440">
    <property type="entry name" value="AdoMet_MTases"/>
    <property type="match status" value="1"/>
</dbReference>
<dbReference type="FunFam" id="3.40.50.150:FF:000023">
    <property type="entry name" value="Ribosomal RNA small subunit methyltransferase A"/>
    <property type="match status" value="1"/>
</dbReference>
<dbReference type="Gene3D" id="1.10.8.100">
    <property type="entry name" value="Ribosomal RNA adenine dimethylase-like, domain 2"/>
    <property type="match status" value="1"/>
</dbReference>
<dbReference type="Gene3D" id="3.40.50.150">
    <property type="entry name" value="Vaccinia Virus protein VP39"/>
    <property type="match status" value="1"/>
</dbReference>
<dbReference type="HAMAP" id="MF_00607">
    <property type="entry name" value="16SrRNA_methyltr_A"/>
    <property type="match status" value="1"/>
</dbReference>
<dbReference type="InterPro" id="IPR001737">
    <property type="entry name" value="KsgA/Erm"/>
</dbReference>
<dbReference type="InterPro" id="IPR023165">
    <property type="entry name" value="rRNA_Ade_diMease-like_C"/>
</dbReference>
<dbReference type="InterPro" id="IPR020596">
    <property type="entry name" value="rRNA_Ade_Mease_Trfase_CS"/>
</dbReference>
<dbReference type="InterPro" id="IPR020598">
    <property type="entry name" value="rRNA_Ade_methylase_Trfase_N"/>
</dbReference>
<dbReference type="InterPro" id="IPR011530">
    <property type="entry name" value="rRNA_adenine_dimethylase"/>
</dbReference>
<dbReference type="InterPro" id="IPR029063">
    <property type="entry name" value="SAM-dependent_MTases_sf"/>
</dbReference>
<dbReference type="NCBIfam" id="TIGR00755">
    <property type="entry name" value="ksgA"/>
    <property type="match status" value="1"/>
</dbReference>
<dbReference type="PANTHER" id="PTHR11727">
    <property type="entry name" value="DIMETHYLADENOSINE TRANSFERASE"/>
    <property type="match status" value="1"/>
</dbReference>
<dbReference type="PANTHER" id="PTHR11727:SF7">
    <property type="entry name" value="DIMETHYLADENOSINE TRANSFERASE-RELATED"/>
    <property type="match status" value="1"/>
</dbReference>
<dbReference type="Pfam" id="PF00398">
    <property type="entry name" value="RrnaAD"/>
    <property type="match status" value="1"/>
</dbReference>
<dbReference type="SMART" id="SM00650">
    <property type="entry name" value="rADc"/>
    <property type="match status" value="1"/>
</dbReference>
<dbReference type="SUPFAM" id="SSF53335">
    <property type="entry name" value="S-adenosyl-L-methionine-dependent methyltransferases"/>
    <property type="match status" value="1"/>
</dbReference>
<dbReference type="PROSITE" id="PS01131">
    <property type="entry name" value="RRNA_A_DIMETH"/>
    <property type="match status" value="1"/>
</dbReference>
<dbReference type="PROSITE" id="PS51689">
    <property type="entry name" value="SAM_RNA_A_N6_MT"/>
    <property type="match status" value="1"/>
</dbReference>
<name>RSMA_STRA1</name>
<organism>
    <name type="scientific">Streptococcus agalactiae serotype Ia (strain ATCC 27591 / A909 / CDC SS700)</name>
    <dbReference type="NCBI Taxonomy" id="205921"/>
    <lineage>
        <taxon>Bacteria</taxon>
        <taxon>Bacillati</taxon>
        <taxon>Bacillota</taxon>
        <taxon>Bacilli</taxon>
        <taxon>Lactobacillales</taxon>
        <taxon>Streptococcaceae</taxon>
        <taxon>Streptococcus</taxon>
    </lineage>
</organism>
<accession>Q3JZA5</accession>
<evidence type="ECO:0000255" key="1">
    <source>
        <dbReference type="HAMAP-Rule" id="MF_00607"/>
    </source>
</evidence>
<comment type="function">
    <text evidence="1">Specifically dimethylates two adjacent adenosines (A1518 and A1519) in the loop of a conserved hairpin near the 3'-end of 16S rRNA in the 30S particle. May play a critical role in biogenesis of 30S subunits.</text>
</comment>
<comment type="catalytic activity">
    <reaction evidence="1">
        <text>adenosine(1518)/adenosine(1519) in 16S rRNA + 4 S-adenosyl-L-methionine = N(6)-dimethyladenosine(1518)/N(6)-dimethyladenosine(1519) in 16S rRNA + 4 S-adenosyl-L-homocysteine + 4 H(+)</text>
        <dbReference type="Rhea" id="RHEA:19609"/>
        <dbReference type="Rhea" id="RHEA-COMP:10232"/>
        <dbReference type="Rhea" id="RHEA-COMP:10233"/>
        <dbReference type="ChEBI" id="CHEBI:15378"/>
        <dbReference type="ChEBI" id="CHEBI:57856"/>
        <dbReference type="ChEBI" id="CHEBI:59789"/>
        <dbReference type="ChEBI" id="CHEBI:74411"/>
        <dbReference type="ChEBI" id="CHEBI:74493"/>
        <dbReference type="EC" id="2.1.1.182"/>
    </reaction>
</comment>
<comment type="subcellular location">
    <subcellularLocation>
        <location evidence="1">Cytoplasm</location>
    </subcellularLocation>
</comment>
<comment type="similarity">
    <text evidence="1">Belongs to the class I-like SAM-binding methyltransferase superfamily. rRNA adenine N(6)-methyltransferase family. RsmA subfamily.</text>
</comment>
<keyword id="KW-0963">Cytoplasm</keyword>
<keyword id="KW-0489">Methyltransferase</keyword>
<keyword id="KW-0694">RNA-binding</keyword>
<keyword id="KW-0698">rRNA processing</keyword>
<keyword id="KW-0949">S-adenosyl-L-methionine</keyword>
<keyword id="KW-0808">Transferase</keyword>
<sequence length="290" mass="32513">MRIADKTVTRAILERHGFTFKKSFGQNFLTDTNILQKIVDTAEIDKGVNVIEIGPGIGALTEFLAENAAEVMAFEIDDRLIPILADTLARFDNVQVVNQDILKADLQTQIQAFKNPDLPIKVVANLPYYITTPILMHLIESKIPFAEFVVMMQKEVADRISAMPNTKAYGSLSIAVQYYMTAKVSFIVPRTVFVPAPNVDSVILKMVRRDQPVVSVQDEDFFFRVSKVAFVHRRKTLWNNLTSHFGKSEDTKAKLEKALEIAKIKPSIRGEALSIPDFASLADALKEVEI</sequence>